<accession>P0C175</accession>
<accession>A0A7S8RFW0</accession>
<protein>
    <recommendedName>
        <fullName evidence="6">Potassium channel toxin epsilon-KTx 1.2</fullName>
    </recommendedName>
    <alternativeName>
        <fullName evidence="7">Tityustoxin-12</fullName>
        <shortName evidence="5">Ts12</shortName>
    </alternativeName>
    <alternativeName>
        <fullName evidence="4">TsPep2</fullName>
    </alternativeName>
</protein>
<comment type="function">
    <text evidence="3">Potassium channel blocker. At 3 uM, this toxin blocks voltage-gated potassium channels rKv1.2/KCNA2 (5%), hKv1.3/KCNA3 (10%),rKv1.4/KCNA4 (20%), Kv11/hERG (24%), and Shaker-IR (27%).</text>
</comment>
<comment type="subcellular location">
    <subcellularLocation>
        <location evidence="2 3">Secreted</location>
    </subcellularLocation>
</comment>
<comment type="tissue specificity">
    <text evidence="7">Expressed by the venom gland.</text>
</comment>
<comment type="domain">
    <text evidence="1">The presence of a 'disulfide through disulfide knot' structurally defines this protein as a knottin.</text>
</comment>
<comment type="domain">
    <text evidence="1">Is completely devoid of the classical secondary structure elements (alpha-helix and/or beta-strand).</text>
</comment>
<comment type="mass spectrometry"/>
<comment type="mass spectrometry"/>
<comment type="miscellaneous">
    <text evidence="3">Negative results: does not block voltage-gated potassium channel rKv1.1/KCNA1, rKv1.5/KCNA5, and rKv1.6/KCNA6.</text>
</comment>
<comment type="similarity">
    <text evidence="7">Belongs to the short scorpion toxin superfamily. Potassium channel inhibitor family. Epsilon-KTx 01 subfamily.</text>
</comment>
<proteinExistence type="evidence at protein level"/>
<dbReference type="EMBL" id="MT450714">
    <property type="protein sequence ID" value="QPD99050.1"/>
    <property type="molecule type" value="mRNA"/>
</dbReference>
<dbReference type="SMR" id="P0C175"/>
<dbReference type="GO" id="GO:0005576">
    <property type="term" value="C:extracellular region"/>
    <property type="evidence" value="ECO:0007669"/>
    <property type="project" value="UniProtKB-SubCell"/>
</dbReference>
<dbReference type="GO" id="GO:0015459">
    <property type="term" value="F:potassium channel regulator activity"/>
    <property type="evidence" value="ECO:0007669"/>
    <property type="project" value="UniProtKB-KW"/>
</dbReference>
<dbReference type="GO" id="GO:0090729">
    <property type="term" value="F:toxin activity"/>
    <property type="evidence" value="ECO:0007669"/>
    <property type="project" value="UniProtKB-KW"/>
</dbReference>
<dbReference type="InterPro" id="IPR036574">
    <property type="entry name" value="Scorpion_toxin-like_sf"/>
</dbReference>
<dbReference type="SUPFAM" id="SSF57095">
    <property type="entry name" value="Scorpion toxin-like"/>
    <property type="match status" value="1"/>
</dbReference>
<dbReference type="PROSITE" id="PS01138">
    <property type="entry name" value="SCORP_SHORT_TOXIN"/>
    <property type="match status" value="1"/>
</dbReference>
<organism>
    <name type="scientific">Tityus serrulatus</name>
    <name type="common">Brazilian scorpion</name>
    <dbReference type="NCBI Taxonomy" id="6887"/>
    <lineage>
        <taxon>Eukaryota</taxon>
        <taxon>Metazoa</taxon>
        <taxon>Ecdysozoa</taxon>
        <taxon>Arthropoda</taxon>
        <taxon>Chelicerata</taxon>
        <taxon>Arachnida</taxon>
        <taxon>Scorpiones</taxon>
        <taxon>Buthida</taxon>
        <taxon>Buthoidea</taxon>
        <taxon>Buthidae</taxon>
        <taxon>Tityus</taxon>
    </lineage>
</organism>
<evidence type="ECO:0000250" key="1">
    <source>
        <dbReference type="UniProtKB" id="P0C174"/>
    </source>
</evidence>
<evidence type="ECO:0000269" key="2">
    <source>
    </source>
</evidence>
<evidence type="ECO:0000269" key="3">
    <source>
    </source>
</evidence>
<evidence type="ECO:0000303" key="4">
    <source>
    </source>
</evidence>
<evidence type="ECO:0000303" key="5">
    <source>
    </source>
</evidence>
<evidence type="ECO:0000303" key="6">
    <source>
    </source>
</evidence>
<evidence type="ECO:0000305" key="7"/>
<evidence type="ECO:0000305" key="8">
    <source>
    </source>
</evidence>
<evidence type="ECO:0000312" key="9">
    <source>
        <dbReference type="EMBL" id="QPD99050.1"/>
    </source>
</evidence>
<sequence>MKFSCGFLLIFLVLSAMIATFSEVEATVKCGGCNRKCCAGGCRSGKCINGKCQCYGRSDLNEEFENYQ</sequence>
<name>KEX12_TITSE</name>
<feature type="signal peptide" evidence="8">
    <location>
        <begin position="1"/>
        <end position="26"/>
    </location>
</feature>
<feature type="peptide" id="PRO_0000227820" description="Potassium channel toxin epsilon-KTx 1.2" evidence="2">
    <location>
        <begin position="27"/>
        <end position="55"/>
    </location>
</feature>
<feature type="propeptide" id="PRO_0000227821" evidence="8">
    <location>
        <begin position="57"/>
        <end position="68"/>
    </location>
</feature>
<feature type="modified residue" description="Tyrosine amide" evidence="8">
    <location>
        <position position="55"/>
    </location>
</feature>
<feature type="disulfide bond" evidence="1">
    <location>
        <begin position="30"/>
        <end position="38"/>
    </location>
</feature>
<feature type="disulfide bond" evidence="1">
    <location>
        <begin position="33"/>
        <end position="54"/>
    </location>
</feature>
<feature type="disulfide bond" evidence="1">
    <location>
        <begin position="37"/>
        <end position="47"/>
    </location>
</feature>
<feature type="disulfide bond" evidence="1">
    <location>
        <begin position="42"/>
        <end position="52"/>
    </location>
</feature>
<keyword id="KW-0027">Amidation</keyword>
<keyword id="KW-0903">Direct protein sequencing</keyword>
<keyword id="KW-1015">Disulfide bond</keyword>
<keyword id="KW-0872">Ion channel impairing toxin</keyword>
<keyword id="KW-0960">Knottin</keyword>
<keyword id="KW-0632">Potassium channel impairing toxin</keyword>
<keyword id="KW-0964">Secreted</keyword>
<keyword id="KW-0732">Signal</keyword>
<keyword id="KW-0800">Toxin</keyword>
<keyword id="KW-1220">Voltage-gated potassium channel impairing toxin</keyword>
<reference key="1">
    <citation type="journal article" date="2003" name="Biochem. Biophys. Res. Commun.">
        <title>Novel structural class of four disulfide-bridged peptides from Tityus serrulatus venom.</title>
        <authorList>
            <person name="Pimenta A.M.C."/>
            <person name="Legros C."/>
            <person name="Almeida F.M."/>
            <person name="Mansuelle P."/>
            <person name="De Lima M.E."/>
            <person name="Bougis P.E."/>
            <person name="Martin-Eauclaire M.-F."/>
        </authorList>
    </citation>
    <scope>NUCLEOTIDE SEQUENCE [MRNA]</scope>
    <scope>PROTEIN SEQUENCE OF 27-55</scope>
    <scope>AMIDATION AT TYR-55</scope>
    <scope>SUBCELLULAR LOCATION</scope>
    <scope>MASS SPECTROMETRY</scope>
    <source>
        <tissue>Venom</tissue>
    </source>
</reference>
<reference evidence="9" key="2">
    <citation type="journal article" date="2021" name="Toxicon">
        <title>Novel components of Tityus serrulatus venom: a transcriptomic approach.</title>
        <authorList>
            <person name="Kalapothakis Y."/>
            <person name="Miranda K."/>
            <person name="Pereira A.H."/>
            <person name="Witt A.S.A."/>
            <person name="Marani C."/>
            <person name="Martins A.P."/>
            <person name="Leal H.G."/>
            <person name="Campos-Junior E."/>
            <person name="Pimenta A.M.C."/>
            <person name="Borges A."/>
            <person name="Chavez-Olortegui C."/>
            <person name="Kalapothakis E."/>
        </authorList>
    </citation>
    <scope>NUCLEOTIDE SEQUENCE [MRNA]</scope>
    <source>
        <tissue>Telson</tissue>
    </source>
</reference>
<reference key="3">
    <citation type="journal article" date="2016" name="Toxins">
        <title>Structural and functional elucidation of peptide Ts11 shows evidence of a novel subfamily of scorpion venom toxins.</title>
        <authorList>
            <person name="Cremonez C.M."/>
            <person name="Maiti M."/>
            <person name="Peigneur S."/>
            <person name="Cassoli J.S."/>
            <person name="Dutra A.A."/>
            <person name="Waelkens E."/>
            <person name="Lescrinier E."/>
            <person name="Herdewijn P."/>
            <person name="de Lima M.E."/>
            <person name="Pimenta A.M."/>
            <person name="Arantes E.C."/>
            <person name="Tytgat J."/>
        </authorList>
    </citation>
    <scope>FUNCTION</scope>
    <scope>SUBCELLULAR LOCATION</scope>
    <scope>MASS SPECTROMETRY</scope>
    <scope>NOMENCLATURE</scope>
    <source>
        <tissue>Venom</tissue>
    </source>
</reference>
<reference key="4">
    <citation type="journal article" date="2009" name="Protein Pept. Lett.">
        <title>Tityus serrulatus scorpion venom and toxins: an overview.</title>
        <authorList>
            <person name="Cologna C.T."/>
            <person name="Marcussi S."/>
            <person name="Giglio J.R."/>
            <person name="Soares A.M."/>
            <person name="Arantes E.C."/>
        </authorList>
    </citation>
    <scope>NOMENCLATURE</scope>
</reference>